<keyword id="KW-0067">ATP-binding</keyword>
<keyword id="KW-0963">Cytoplasm</keyword>
<keyword id="KW-0235">DNA replication</keyword>
<keyword id="KW-0238">DNA-binding</keyword>
<keyword id="KW-0446">Lipid-binding</keyword>
<keyword id="KW-0547">Nucleotide-binding</keyword>
<gene>
    <name evidence="1" type="primary">dnaA</name>
    <name type="ordered locus">EcSMS35_4067</name>
</gene>
<sequence length="467" mass="52551">MSLSLWQQCLARLQDELPATEFSMWIRPLQAELSDNTLALYAPNRFVLDWVRDKYLNNINGLLTSFCGADAPQLRFEVGTKPVTQTPQAAVTSNVAAPAQVAQTQPQRAAPSTRSGWDNVPAPAEPTYRSNVNVKHTFDNFVEGKSNQLARAAARQVADNPGGAYNPLFLYGGTGLGKTHLLHAVGNGIMARKPNAKVVYMHSERFVQDMVKALQNNAIEEFKRYYRSVDALLIDDIQFFANKERSQEEFFHTFNALLEGNQQIILTSDRYPKEINGVEDRLKSRFGWGLTVAIEPPELETRVAILMKKADENDIRLPGEVAFFIAKRLRSNVRELEGALNRVIANANFTGRAITIDFVREALRDLLALQEKLVTIDNIQKTVAEYYKIKVADLLSKRRSRSVARPRQMAMALAKELTNHSLPEIGDAFGGRDHTTVLHACRKIEQLREESHDIKEDFSNLIRTLSS</sequence>
<accession>B1LL27</accession>
<comment type="function">
    <text evidence="1">Plays an essential role in the initiation and regulation of chromosomal replication. ATP-DnaA binds to the origin of replication (oriC) to initiate formation of the DNA replication initiation complex once per cell cycle. Binds the DnaA box (a 9 base pair repeat at the origin) and separates the double-stranded (ds)DNA. Forms a right-handed helical filament on oriC DNA; dsDNA binds to the exterior of the filament while single-stranded (ss)DNA is stabiized in the filament's interior. The ATP-DnaA-oriC complex binds and stabilizes one strand of the AT-rich DNA unwinding element (DUE), permitting loading of DNA polymerase. After initiation quickly degrades to an ADP-DnaA complex that is not apt for DNA replication. Binds acidic phospholipids.</text>
</comment>
<comment type="subunit">
    <text evidence="1">Oligomerizes as a right-handed, spiral filament on DNA at oriC.</text>
</comment>
<comment type="subcellular location">
    <subcellularLocation>
        <location evidence="1">Cytoplasm</location>
    </subcellularLocation>
</comment>
<comment type="domain">
    <text evidence="1">Domain I is involved in oligomerization and binding regulators, domain II is flexibile and of varying length in different bacteria, domain III forms the AAA+ region, while domain IV binds dsDNA.</text>
</comment>
<comment type="similarity">
    <text evidence="1">Belongs to the DnaA family.</text>
</comment>
<feature type="chain" id="PRO_1000121979" description="Chromosomal replication initiator protein DnaA">
    <location>
        <begin position="1"/>
        <end position="467"/>
    </location>
</feature>
<feature type="region of interest" description="Domain I, interacts with DnaA modulators" evidence="1">
    <location>
        <begin position="1"/>
        <end position="90"/>
    </location>
</feature>
<feature type="region of interest" description="Domain II" evidence="1">
    <location>
        <begin position="91"/>
        <end position="130"/>
    </location>
</feature>
<feature type="region of interest" description="Disordered" evidence="2">
    <location>
        <begin position="98"/>
        <end position="119"/>
    </location>
</feature>
<feature type="region of interest" description="Domain III, AAA+ region" evidence="1">
    <location>
        <begin position="131"/>
        <end position="347"/>
    </location>
</feature>
<feature type="region of interest" description="Domain IV, binds dsDNA" evidence="1">
    <location>
        <begin position="348"/>
        <end position="467"/>
    </location>
</feature>
<feature type="compositionally biased region" description="Low complexity" evidence="2">
    <location>
        <begin position="98"/>
        <end position="111"/>
    </location>
</feature>
<feature type="binding site" evidence="1">
    <location>
        <position position="175"/>
    </location>
    <ligand>
        <name>ATP</name>
        <dbReference type="ChEBI" id="CHEBI:30616"/>
    </ligand>
</feature>
<feature type="binding site" evidence="1">
    <location>
        <position position="177"/>
    </location>
    <ligand>
        <name>ATP</name>
        <dbReference type="ChEBI" id="CHEBI:30616"/>
    </ligand>
</feature>
<feature type="binding site" evidence="1">
    <location>
        <position position="178"/>
    </location>
    <ligand>
        <name>ATP</name>
        <dbReference type="ChEBI" id="CHEBI:30616"/>
    </ligand>
</feature>
<feature type="binding site" evidence="1">
    <location>
        <position position="179"/>
    </location>
    <ligand>
        <name>ATP</name>
        <dbReference type="ChEBI" id="CHEBI:30616"/>
    </ligand>
</feature>
<organism>
    <name type="scientific">Escherichia coli (strain SMS-3-5 / SECEC)</name>
    <dbReference type="NCBI Taxonomy" id="439855"/>
    <lineage>
        <taxon>Bacteria</taxon>
        <taxon>Pseudomonadati</taxon>
        <taxon>Pseudomonadota</taxon>
        <taxon>Gammaproteobacteria</taxon>
        <taxon>Enterobacterales</taxon>
        <taxon>Enterobacteriaceae</taxon>
        <taxon>Escherichia</taxon>
    </lineage>
</organism>
<proteinExistence type="inferred from homology"/>
<dbReference type="EMBL" id="CP000970">
    <property type="protein sequence ID" value="ACB15614.1"/>
    <property type="molecule type" value="Genomic_DNA"/>
</dbReference>
<dbReference type="RefSeq" id="WP_000059111.1">
    <property type="nucleotide sequence ID" value="NC_010498.1"/>
</dbReference>
<dbReference type="BMRB" id="B1LL27"/>
<dbReference type="SMR" id="B1LL27"/>
<dbReference type="GeneID" id="93778443"/>
<dbReference type="KEGG" id="ecm:EcSMS35_4067"/>
<dbReference type="HOGENOM" id="CLU_026910_0_1_6"/>
<dbReference type="Proteomes" id="UP000007011">
    <property type="component" value="Chromosome"/>
</dbReference>
<dbReference type="GO" id="GO:0005737">
    <property type="term" value="C:cytoplasm"/>
    <property type="evidence" value="ECO:0007669"/>
    <property type="project" value="UniProtKB-SubCell"/>
</dbReference>
<dbReference type="GO" id="GO:0005886">
    <property type="term" value="C:plasma membrane"/>
    <property type="evidence" value="ECO:0007669"/>
    <property type="project" value="TreeGrafter"/>
</dbReference>
<dbReference type="GO" id="GO:0005524">
    <property type="term" value="F:ATP binding"/>
    <property type="evidence" value="ECO:0007669"/>
    <property type="project" value="UniProtKB-UniRule"/>
</dbReference>
<dbReference type="GO" id="GO:0016887">
    <property type="term" value="F:ATP hydrolysis activity"/>
    <property type="evidence" value="ECO:0007669"/>
    <property type="project" value="InterPro"/>
</dbReference>
<dbReference type="GO" id="GO:0003688">
    <property type="term" value="F:DNA replication origin binding"/>
    <property type="evidence" value="ECO:0007669"/>
    <property type="project" value="UniProtKB-UniRule"/>
</dbReference>
<dbReference type="GO" id="GO:0008289">
    <property type="term" value="F:lipid binding"/>
    <property type="evidence" value="ECO:0007669"/>
    <property type="project" value="UniProtKB-KW"/>
</dbReference>
<dbReference type="GO" id="GO:0006270">
    <property type="term" value="P:DNA replication initiation"/>
    <property type="evidence" value="ECO:0007669"/>
    <property type="project" value="UniProtKB-UniRule"/>
</dbReference>
<dbReference type="GO" id="GO:0006275">
    <property type="term" value="P:regulation of DNA replication"/>
    <property type="evidence" value="ECO:0007669"/>
    <property type="project" value="UniProtKB-UniRule"/>
</dbReference>
<dbReference type="CDD" id="cd00009">
    <property type="entry name" value="AAA"/>
    <property type="match status" value="1"/>
</dbReference>
<dbReference type="CDD" id="cd06571">
    <property type="entry name" value="Bac_DnaA_C"/>
    <property type="match status" value="1"/>
</dbReference>
<dbReference type="FunFam" id="1.10.1750.10:FF:000001">
    <property type="entry name" value="Chromosomal replication initiator protein DnaA"/>
    <property type="match status" value="1"/>
</dbReference>
<dbReference type="FunFam" id="1.10.8.60:FF:000003">
    <property type="entry name" value="Chromosomal replication initiator protein DnaA"/>
    <property type="match status" value="1"/>
</dbReference>
<dbReference type="FunFam" id="3.30.300.180:FF:000001">
    <property type="entry name" value="Chromosomal replication initiator protein DnaA"/>
    <property type="match status" value="1"/>
</dbReference>
<dbReference type="FunFam" id="3.40.50.300:FF:000103">
    <property type="entry name" value="Chromosomal replication initiator protein DnaA"/>
    <property type="match status" value="1"/>
</dbReference>
<dbReference type="Gene3D" id="1.10.1750.10">
    <property type="match status" value="1"/>
</dbReference>
<dbReference type="Gene3D" id="1.10.8.60">
    <property type="match status" value="1"/>
</dbReference>
<dbReference type="Gene3D" id="3.30.300.180">
    <property type="match status" value="1"/>
</dbReference>
<dbReference type="Gene3D" id="3.40.50.300">
    <property type="entry name" value="P-loop containing nucleotide triphosphate hydrolases"/>
    <property type="match status" value="1"/>
</dbReference>
<dbReference type="HAMAP" id="MF_00377">
    <property type="entry name" value="DnaA_bact"/>
    <property type="match status" value="1"/>
</dbReference>
<dbReference type="InterPro" id="IPR003593">
    <property type="entry name" value="AAA+_ATPase"/>
</dbReference>
<dbReference type="InterPro" id="IPR001957">
    <property type="entry name" value="Chromosome_initiator_DnaA"/>
</dbReference>
<dbReference type="InterPro" id="IPR020591">
    <property type="entry name" value="Chromosome_initiator_DnaA-like"/>
</dbReference>
<dbReference type="InterPro" id="IPR018312">
    <property type="entry name" value="Chromosome_initiator_DnaA_CS"/>
</dbReference>
<dbReference type="InterPro" id="IPR013159">
    <property type="entry name" value="DnaA_C"/>
</dbReference>
<dbReference type="InterPro" id="IPR013317">
    <property type="entry name" value="DnaA_dom"/>
</dbReference>
<dbReference type="InterPro" id="IPR024633">
    <property type="entry name" value="DnaA_N_dom"/>
</dbReference>
<dbReference type="InterPro" id="IPR038454">
    <property type="entry name" value="DnaA_N_sf"/>
</dbReference>
<dbReference type="InterPro" id="IPR027417">
    <property type="entry name" value="P-loop_NTPase"/>
</dbReference>
<dbReference type="InterPro" id="IPR010921">
    <property type="entry name" value="Trp_repressor/repl_initiator"/>
</dbReference>
<dbReference type="NCBIfam" id="TIGR00362">
    <property type="entry name" value="DnaA"/>
    <property type="match status" value="1"/>
</dbReference>
<dbReference type="PANTHER" id="PTHR30050">
    <property type="entry name" value="CHROMOSOMAL REPLICATION INITIATOR PROTEIN DNAA"/>
    <property type="match status" value="1"/>
</dbReference>
<dbReference type="PANTHER" id="PTHR30050:SF2">
    <property type="entry name" value="CHROMOSOMAL REPLICATION INITIATOR PROTEIN DNAA"/>
    <property type="match status" value="1"/>
</dbReference>
<dbReference type="Pfam" id="PF00308">
    <property type="entry name" value="Bac_DnaA"/>
    <property type="match status" value="1"/>
</dbReference>
<dbReference type="Pfam" id="PF08299">
    <property type="entry name" value="Bac_DnaA_C"/>
    <property type="match status" value="1"/>
</dbReference>
<dbReference type="Pfam" id="PF11638">
    <property type="entry name" value="DnaA_N"/>
    <property type="match status" value="1"/>
</dbReference>
<dbReference type="PRINTS" id="PR00051">
    <property type="entry name" value="DNAA"/>
</dbReference>
<dbReference type="SMART" id="SM00382">
    <property type="entry name" value="AAA"/>
    <property type="match status" value="1"/>
</dbReference>
<dbReference type="SMART" id="SM00760">
    <property type="entry name" value="Bac_DnaA_C"/>
    <property type="match status" value="1"/>
</dbReference>
<dbReference type="SUPFAM" id="SSF52540">
    <property type="entry name" value="P-loop containing nucleoside triphosphate hydrolases"/>
    <property type="match status" value="1"/>
</dbReference>
<dbReference type="SUPFAM" id="SSF48295">
    <property type="entry name" value="TrpR-like"/>
    <property type="match status" value="1"/>
</dbReference>
<dbReference type="PROSITE" id="PS01008">
    <property type="entry name" value="DNAA"/>
    <property type="match status" value="1"/>
</dbReference>
<protein>
    <recommendedName>
        <fullName evidence="1">Chromosomal replication initiator protein DnaA</fullName>
    </recommendedName>
</protein>
<reference key="1">
    <citation type="journal article" date="2008" name="J. Bacteriol.">
        <title>Insights into the environmental resistance gene pool from the genome sequence of the multidrug-resistant environmental isolate Escherichia coli SMS-3-5.</title>
        <authorList>
            <person name="Fricke W.F."/>
            <person name="Wright M.S."/>
            <person name="Lindell A.H."/>
            <person name="Harkins D.M."/>
            <person name="Baker-Austin C."/>
            <person name="Ravel J."/>
            <person name="Stepanauskas R."/>
        </authorList>
    </citation>
    <scope>NUCLEOTIDE SEQUENCE [LARGE SCALE GENOMIC DNA]</scope>
    <source>
        <strain>SMS-3-5 / SECEC</strain>
    </source>
</reference>
<name>DNAA_ECOSM</name>
<evidence type="ECO:0000255" key="1">
    <source>
        <dbReference type="HAMAP-Rule" id="MF_00377"/>
    </source>
</evidence>
<evidence type="ECO:0000256" key="2">
    <source>
        <dbReference type="SAM" id="MobiDB-lite"/>
    </source>
</evidence>